<protein>
    <recommendedName>
        <fullName>Transcriptional regulator MraZ</fullName>
    </recommendedName>
</protein>
<gene>
    <name evidence="1" type="primary">mraZ</name>
    <name type="ordered locus">EcSMS35_0086</name>
</gene>
<name>MRAZ_ECOSM</name>
<sequence>MFRGATLVNLDSKGRLSVPTRYREQLLENAAGQMVCTIDIHHPCLLLYPLPEWEIIEQKLSRLSSMNPVERRVQRLLLGHASECQMDGAGRLLIAPVLRQHAGLTKEVMLVGQFNKFELWDETTWHQQVKEDIDAEQLATGDLSERLQDLSL</sequence>
<feature type="chain" id="PRO_1000134796" description="Transcriptional regulator MraZ">
    <location>
        <begin position="1"/>
        <end position="152"/>
    </location>
</feature>
<feature type="domain" description="SpoVT-AbrB 1" evidence="2">
    <location>
        <begin position="5"/>
        <end position="52"/>
    </location>
</feature>
<feature type="domain" description="SpoVT-AbrB 2" evidence="2">
    <location>
        <begin position="81"/>
        <end position="124"/>
    </location>
</feature>
<evidence type="ECO:0000255" key="1">
    <source>
        <dbReference type="HAMAP-Rule" id="MF_01008"/>
    </source>
</evidence>
<evidence type="ECO:0000255" key="2">
    <source>
        <dbReference type="PROSITE-ProRule" id="PRU01076"/>
    </source>
</evidence>
<accession>B1LG18</accession>
<organism>
    <name type="scientific">Escherichia coli (strain SMS-3-5 / SECEC)</name>
    <dbReference type="NCBI Taxonomy" id="439855"/>
    <lineage>
        <taxon>Bacteria</taxon>
        <taxon>Pseudomonadati</taxon>
        <taxon>Pseudomonadota</taxon>
        <taxon>Gammaproteobacteria</taxon>
        <taxon>Enterobacterales</taxon>
        <taxon>Enterobacteriaceae</taxon>
        <taxon>Escherichia</taxon>
    </lineage>
</organism>
<comment type="function">
    <text evidence="1">Negatively regulates its own expression and that of the subsequent genes in the proximal part of the division and cell wall (dcw) gene cluster. Acts by binding directly to DNA. May also regulate the expression of genes outside the dcw cluster.</text>
</comment>
<comment type="subunit">
    <text evidence="1">Forms oligomers.</text>
</comment>
<comment type="subcellular location">
    <subcellularLocation>
        <location evidence="1">Cytoplasm</location>
        <location evidence="1">Nucleoid</location>
    </subcellularLocation>
</comment>
<comment type="similarity">
    <text evidence="1">Belongs to the MraZ family.</text>
</comment>
<proteinExistence type="inferred from homology"/>
<dbReference type="EMBL" id="CP000970">
    <property type="protein sequence ID" value="ACB19913.1"/>
    <property type="molecule type" value="Genomic_DNA"/>
</dbReference>
<dbReference type="RefSeq" id="WP_001295770.1">
    <property type="nucleotide sequence ID" value="NC_010498.1"/>
</dbReference>
<dbReference type="SMR" id="B1LG18"/>
<dbReference type="GeneID" id="75202102"/>
<dbReference type="KEGG" id="ecm:EcSMS35_0086"/>
<dbReference type="HOGENOM" id="CLU_107907_2_0_6"/>
<dbReference type="Proteomes" id="UP000007011">
    <property type="component" value="Chromosome"/>
</dbReference>
<dbReference type="GO" id="GO:0005737">
    <property type="term" value="C:cytoplasm"/>
    <property type="evidence" value="ECO:0007669"/>
    <property type="project" value="UniProtKB-UniRule"/>
</dbReference>
<dbReference type="GO" id="GO:0009295">
    <property type="term" value="C:nucleoid"/>
    <property type="evidence" value="ECO:0007669"/>
    <property type="project" value="UniProtKB-SubCell"/>
</dbReference>
<dbReference type="GO" id="GO:0003700">
    <property type="term" value="F:DNA-binding transcription factor activity"/>
    <property type="evidence" value="ECO:0007669"/>
    <property type="project" value="UniProtKB-UniRule"/>
</dbReference>
<dbReference type="GO" id="GO:0000976">
    <property type="term" value="F:transcription cis-regulatory region binding"/>
    <property type="evidence" value="ECO:0007669"/>
    <property type="project" value="TreeGrafter"/>
</dbReference>
<dbReference type="GO" id="GO:2000143">
    <property type="term" value="P:negative regulation of DNA-templated transcription initiation"/>
    <property type="evidence" value="ECO:0007669"/>
    <property type="project" value="TreeGrafter"/>
</dbReference>
<dbReference type="CDD" id="cd16321">
    <property type="entry name" value="MraZ_C"/>
    <property type="match status" value="1"/>
</dbReference>
<dbReference type="CDD" id="cd16320">
    <property type="entry name" value="MraZ_N"/>
    <property type="match status" value="1"/>
</dbReference>
<dbReference type="FunFam" id="3.40.1550.20:FF:000001">
    <property type="entry name" value="Transcriptional regulator MraZ"/>
    <property type="match status" value="1"/>
</dbReference>
<dbReference type="Gene3D" id="3.40.1550.20">
    <property type="entry name" value="Transcriptional regulator MraZ domain"/>
    <property type="match status" value="1"/>
</dbReference>
<dbReference type="HAMAP" id="MF_01008">
    <property type="entry name" value="MraZ"/>
    <property type="match status" value="1"/>
</dbReference>
<dbReference type="InterPro" id="IPR003444">
    <property type="entry name" value="MraZ"/>
</dbReference>
<dbReference type="InterPro" id="IPR035644">
    <property type="entry name" value="MraZ_C"/>
</dbReference>
<dbReference type="InterPro" id="IPR020603">
    <property type="entry name" value="MraZ_dom"/>
</dbReference>
<dbReference type="InterPro" id="IPR035642">
    <property type="entry name" value="MraZ_N"/>
</dbReference>
<dbReference type="InterPro" id="IPR038619">
    <property type="entry name" value="MraZ_sf"/>
</dbReference>
<dbReference type="InterPro" id="IPR007159">
    <property type="entry name" value="SpoVT-AbrB_dom"/>
</dbReference>
<dbReference type="InterPro" id="IPR037914">
    <property type="entry name" value="SpoVT-AbrB_sf"/>
</dbReference>
<dbReference type="NCBIfam" id="TIGR00242">
    <property type="entry name" value="division/cell wall cluster transcriptional repressor MraZ"/>
    <property type="match status" value="1"/>
</dbReference>
<dbReference type="PANTHER" id="PTHR34701">
    <property type="entry name" value="TRANSCRIPTIONAL REGULATOR MRAZ"/>
    <property type="match status" value="1"/>
</dbReference>
<dbReference type="PANTHER" id="PTHR34701:SF1">
    <property type="entry name" value="TRANSCRIPTIONAL REGULATOR MRAZ"/>
    <property type="match status" value="1"/>
</dbReference>
<dbReference type="Pfam" id="PF02381">
    <property type="entry name" value="MraZ"/>
    <property type="match status" value="2"/>
</dbReference>
<dbReference type="SUPFAM" id="SSF89447">
    <property type="entry name" value="AbrB/MazE/MraZ-like"/>
    <property type="match status" value="1"/>
</dbReference>
<dbReference type="PROSITE" id="PS51740">
    <property type="entry name" value="SPOVT_ABRB"/>
    <property type="match status" value="2"/>
</dbReference>
<reference key="1">
    <citation type="journal article" date="2008" name="J. Bacteriol.">
        <title>Insights into the environmental resistance gene pool from the genome sequence of the multidrug-resistant environmental isolate Escherichia coli SMS-3-5.</title>
        <authorList>
            <person name="Fricke W.F."/>
            <person name="Wright M.S."/>
            <person name="Lindell A.H."/>
            <person name="Harkins D.M."/>
            <person name="Baker-Austin C."/>
            <person name="Ravel J."/>
            <person name="Stepanauskas R."/>
        </authorList>
    </citation>
    <scope>NUCLEOTIDE SEQUENCE [LARGE SCALE GENOMIC DNA]</scope>
    <source>
        <strain>SMS-3-5 / SECEC</strain>
    </source>
</reference>
<keyword id="KW-0963">Cytoplasm</keyword>
<keyword id="KW-0238">DNA-binding</keyword>
<keyword id="KW-0677">Repeat</keyword>
<keyword id="KW-0678">Repressor</keyword>
<keyword id="KW-0804">Transcription</keyword>
<keyword id="KW-0805">Transcription regulation</keyword>